<feature type="chain" id="PRO_0000278364" description="Pre-rRNA-processing protein pno1">
    <location>
        <begin position="1"/>
        <end position="260"/>
    </location>
</feature>
<feature type="domain" description="KH">
    <location>
        <begin position="181"/>
        <end position="233"/>
    </location>
</feature>
<proteinExistence type="inferred from homology"/>
<keyword id="KW-0963">Cytoplasm</keyword>
<keyword id="KW-0539">Nucleus</keyword>
<keyword id="KW-1185">Reference proteome</keyword>
<keyword id="KW-0690">Ribosome biogenesis</keyword>
<keyword id="KW-0694">RNA-binding</keyword>
<organism>
    <name type="scientific">Aspergillus oryzae (strain ATCC 42149 / RIB 40)</name>
    <name type="common">Yellow koji mold</name>
    <dbReference type="NCBI Taxonomy" id="510516"/>
    <lineage>
        <taxon>Eukaryota</taxon>
        <taxon>Fungi</taxon>
        <taxon>Dikarya</taxon>
        <taxon>Ascomycota</taxon>
        <taxon>Pezizomycotina</taxon>
        <taxon>Eurotiomycetes</taxon>
        <taxon>Eurotiomycetidae</taxon>
        <taxon>Eurotiales</taxon>
        <taxon>Aspergillaceae</taxon>
        <taxon>Aspergillus</taxon>
        <taxon>Aspergillus subgen. Circumdati</taxon>
    </lineage>
</organism>
<dbReference type="EMBL" id="BA000050">
    <property type="protein sequence ID" value="BAE57254.1"/>
    <property type="molecule type" value="Genomic_DNA"/>
</dbReference>
<dbReference type="SMR" id="Q2UMG1"/>
<dbReference type="STRING" id="510516.Q2UMG1"/>
<dbReference type="EnsemblFungi" id="BAE57254">
    <property type="protein sequence ID" value="BAE57254"/>
    <property type="gene ID" value="AO090003000014"/>
</dbReference>
<dbReference type="HOGENOM" id="CLU_064992_0_2_1"/>
<dbReference type="OMA" id="TPLRNNW"/>
<dbReference type="Proteomes" id="UP000006564">
    <property type="component" value="Chromosome 2"/>
</dbReference>
<dbReference type="GO" id="GO:0005737">
    <property type="term" value="C:cytoplasm"/>
    <property type="evidence" value="ECO:0007669"/>
    <property type="project" value="UniProtKB-SubCell"/>
</dbReference>
<dbReference type="GO" id="GO:0005730">
    <property type="term" value="C:nucleolus"/>
    <property type="evidence" value="ECO:0007669"/>
    <property type="project" value="UniProtKB-SubCell"/>
</dbReference>
<dbReference type="GO" id="GO:0042134">
    <property type="term" value="F:rRNA primary transcript binding"/>
    <property type="evidence" value="ECO:0007669"/>
    <property type="project" value="EnsemblFungi"/>
</dbReference>
<dbReference type="GO" id="GO:0051082">
    <property type="term" value="F:unfolded protein binding"/>
    <property type="evidence" value="ECO:0007669"/>
    <property type="project" value="EnsemblFungi"/>
</dbReference>
<dbReference type="GO" id="GO:0000447">
    <property type="term" value="P:endonucleolytic cleavage in ITS1 to separate SSU-rRNA from 5.8S rRNA and LSU-rRNA from tricistronic rRNA transcript (SSU-rRNA, 5.8S rRNA, LSU-rRNA)"/>
    <property type="evidence" value="ECO:0007669"/>
    <property type="project" value="EnsemblFungi"/>
</dbReference>
<dbReference type="GO" id="GO:0000472">
    <property type="term" value="P:endonucleolytic cleavage to generate mature 5'-end of SSU-rRNA from (SSU-rRNA, 5.8S rRNA, LSU-rRNA)"/>
    <property type="evidence" value="ECO:0007669"/>
    <property type="project" value="EnsemblFungi"/>
</dbReference>
<dbReference type="GO" id="GO:0043248">
    <property type="term" value="P:proteasome assembly"/>
    <property type="evidence" value="ECO:0007669"/>
    <property type="project" value="EnsemblFungi"/>
</dbReference>
<dbReference type="GO" id="GO:0000056">
    <property type="term" value="P:ribosomal small subunit export from nucleus"/>
    <property type="evidence" value="ECO:0007669"/>
    <property type="project" value="EnsemblFungi"/>
</dbReference>
<dbReference type="GO" id="GO:0042255">
    <property type="term" value="P:ribosome assembly"/>
    <property type="evidence" value="ECO:0007669"/>
    <property type="project" value="EnsemblFungi"/>
</dbReference>
<dbReference type="CDD" id="cd22391">
    <property type="entry name" value="KH-I_PNO1_rpt1"/>
    <property type="match status" value="1"/>
</dbReference>
<dbReference type="CDD" id="cd22392">
    <property type="entry name" value="KH-I_PNO1_rpt2"/>
    <property type="match status" value="1"/>
</dbReference>
<dbReference type="FunFam" id="3.30.1370.10:FF:000009">
    <property type="entry name" value="RNA-binding protein PNO1"/>
    <property type="match status" value="1"/>
</dbReference>
<dbReference type="Gene3D" id="3.30.1370.10">
    <property type="entry name" value="K Homology domain, type 1"/>
    <property type="match status" value="1"/>
</dbReference>
<dbReference type="InterPro" id="IPR055212">
    <property type="entry name" value="KH-I_PNO1_first"/>
</dbReference>
<dbReference type="InterPro" id="IPR036612">
    <property type="entry name" value="KH_dom_type_1_sf"/>
</dbReference>
<dbReference type="InterPro" id="IPR055211">
    <property type="entry name" value="KH_PNO1_2nd"/>
</dbReference>
<dbReference type="PANTHER" id="PTHR12826">
    <property type="entry name" value="RIBONUCLEASE Y"/>
    <property type="match status" value="1"/>
</dbReference>
<dbReference type="PANTHER" id="PTHR12826:SF13">
    <property type="entry name" value="RNA-BINDING PROTEIN PNO1"/>
    <property type="match status" value="1"/>
</dbReference>
<dbReference type="Pfam" id="PF22891">
    <property type="entry name" value="KH_PNO1_2nd"/>
    <property type="match status" value="1"/>
</dbReference>
<dbReference type="SUPFAM" id="SSF54791">
    <property type="entry name" value="Eukaryotic type KH-domain (KH-domain type I)"/>
    <property type="match status" value="1"/>
</dbReference>
<evidence type="ECO:0000250" key="1"/>
<evidence type="ECO:0000250" key="2">
    <source>
        <dbReference type="UniProtKB" id="Q99216"/>
    </source>
</evidence>
<evidence type="ECO:0000305" key="3"/>
<accession>Q2UMG1</accession>
<comment type="function">
    <text evidence="1">Required for small ribosomal subunit (SSU) synthesis. Has a role in the processing of early nucleolar and late cytoplasmic pre-RNA species (By similarity).</text>
</comment>
<comment type="subunit">
    <text evidence="1">Component of the small ribosomal subunit, ribosomal RNA processing complex (SSU RRP complex).</text>
</comment>
<comment type="subcellular location">
    <subcellularLocation>
        <location evidence="2">Cytoplasm</location>
    </subcellularLocation>
    <subcellularLocation>
        <location evidence="2">Nucleus</location>
        <location evidence="2">Nucleolus</location>
    </subcellularLocation>
</comment>
<comment type="similarity">
    <text evidence="3">Belongs to the PNO1 family.</text>
</comment>
<protein>
    <recommendedName>
        <fullName>Pre-rRNA-processing protein pno1</fullName>
    </recommendedName>
</protein>
<name>PNO1_ASPOR</name>
<sequence>MPAPTALKGLDQTTTAGVPVTQAAIVQDDEVLIDAQTSAEESVPVLAPLGENAQDTDMRIDEEGRPVFTPAKDTNTVYRVETRKVPVPPHRFSPLKASWSRIYPPLVEHLKLQVRMNIKSRAVELRTSKFTTDTGALQKGEDFVKAFTLGFDVDDAIALLRLDDLYIRSFEIRDVKASLHGEHLSRAIGRIAGKDGKLKHSIENATRTRIVLADQKIHLLGGYRNILVAQEAVVSLILGSPPGKVYGNLRKVASRMKERF</sequence>
<gene>
    <name type="primary">pno1</name>
    <name type="ORF">AO090003000014</name>
</gene>
<reference key="1">
    <citation type="journal article" date="2005" name="Nature">
        <title>Genome sequencing and analysis of Aspergillus oryzae.</title>
        <authorList>
            <person name="Machida M."/>
            <person name="Asai K."/>
            <person name="Sano M."/>
            <person name="Tanaka T."/>
            <person name="Kumagai T."/>
            <person name="Terai G."/>
            <person name="Kusumoto K."/>
            <person name="Arima T."/>
            <person name="Akita O."/>
            <person name="Kashiwagi Y."/>
            <person name="Abe K."/>
            <person name="Gomi K."/>
            <person name="Horiuchi H."/>
            <person name="Kitamoto K."/>
            <person name="Kobayashi T."/>
            <person name="Takeuchi M."/>
            <person name="Denning D.W."/>
            <person name="Galagan J.E."/>
            <person name="Nierman W.C."/>
            <person name="Yu J."/>
            <person name="Archer D.B."/>
            <person name="Bennett J.W."/>
            <person name="Bhatnagar D."/>
            <person name="Cleveland T.E."/>
            <person name="Fedorova N.D."/>
            <person name="Gotoh O."/>
            <person name="Horikawa H."/>
            <person name="Hosoyama A."/>
            <person name="Ichinomiya M."/>
            <person name="Igarashi R."/>
            <person name="Iwashita K."/>
            <person name="Juvvadi P.R."/>
            <person name="Kato M."/>
            <person name="Kato Y."/>
            <person name="Kin T."/>
            <person name="Kokubun A."/>
            <person name="Maeda H."/>
            <person name="Maeyama N."/>
            <person name="Maruyama J."/>
            <person name="Nagasaki H."/>
            <person name="Nakajima T."/>
            <person name="Oda K."/>
            <person name="Okada K."/>
            <person name="Paulsen I."/>
            <person name="Sakamoto K."/>
            <person name="Sawano T."/>
            <person name="Takahashi M."/>
            <person name="Takase K."/>
            <person name="Terabayashi Y."/>
            <person name="Wortman J.R."/>
            <person name="Yamada O."/>
            <person name="Yamagata Y."/>
            <person name="Anazawa H."/>
            <person name="Hata Y."/>
            <person name="Koide Y."/>
            <person name="Komori T."/>
            <person name="Koyama Y."/>
            <person name="Minetoki T."/>
            <person name="Suharnan S."/>
            <person name="Tanaka A."/>
            <person name="Isono K."/>
            <person name="Kuhara S."/>
            <person name="Ogasawara N."/>
            <person name="Kikuchi H."/>
        </authorList>
    </citation>
    <scope>NUCLEOTIDE SEQUENCE [LARGE SCALE GENOMIC DNA]</scope>
    <source>
        <strain>ATCC 42149 / RIB 40</strain>
    </source>
</reference>